<reference key="1">
    <citation type="submission" date="2007-04" db="EMBL/GenBank/DDBJ databases">
        <title>Complete sequence of Pseudomonas mendocina ymp.</title>
        <authorList>
            <consortium name="US DOE Joint Genome Institute"/>
            <person name="Copeland A."/>
            <person name="Lucas S."/>
            <person name="Lapidus A."/>
            <person name="Barry K."/>
            <person name="Glavina del Rio T."/>
            <person name="Dalin E."/>
            <person name="Tice H."/>
            <person name="Pitluck S."/>
            <person name="Kiss H."/>
            <person name="Brettin T."/>
            <person name="Detter J.C."/>
            <person name="Bruce D."/>
            <person name="Han C."/>
            <person name="Schmutz J."/>
            <person name="Larimer F."/>
            <person name="Land M."/>
            <person name="Hauser L."/>
            <person name="Kyrpides N."/>
            <person name="Mikhailova N."/>
            <person name="Hersman L."/>
            <person name="Dubois J."/>
            <person name="Maurice P."/>
            <person name="Richardson P."/>
        </authorList>
    </citation>
    <scope>NUCLEOTIDE SEQUENCE [LARGE SCALE GENOMIC DNA]</scope>
    <source>
        <strain>ymp</strain>
    </source>
</reference>
<evidence type="ECO:0000255" key="1">
    <source>
        <dbReference type="HAMAP-Rule" id="MF_00766"/>
    </source>
</evidence>
<sequence>MLRSLTRRLLKLLFWLMLASALLVLALRWLPPPGTALMLERKIESWGSEQPLQLKRQWRPWNELPDHLKMAVIAAEDQKFAEHWGFDVGAIQAALAHNQSGGSLRGASTLSQQVAKNLFLWSGRSWPRKALEAWFTALIELFWPKERILEVYLNSVEWGDGIFGAEAAAQHHFGVGAPYLNRQQASQLAAVLPNPRRWSAGRPDAYVNRRAAWIRQQMTQLGGSHYLNQLKPRYPEWWPRWL</sequence>
<proteinExistence type="inferred from homology"/>
<protein>
    <recommendedName>
        <fullName evidence="1">Biosynthetic peptidoglycan transglycosylase</fullName>
        <ecNumber evidence="1">2.4.99.28</ecNumber>
    </recommendedName>
    <alternativeName>
        <fullName evidence="1">Glycan polymerase</fullName>
    </alternativeName>
    <alternativeName>
        <fullName evidence="1">Peptidoglycan glycosyltransferase MtgA</fullName>
        <shortName evidence="1">PGT</shortName>
    </alternativeName>
</protein>
<accession>A4Y001</accession>
<organism>
    <name type="scientific">Ectopseudomonas mendocina (strain ymp)</name>
    <name type="common">Pseudomonas mendocina</name>
    <dbReference type="NCBI Taxonomy" id="399739"/>
    <lineage>
        <taxon>Bacteria</taxon>
        <taxon>Pseudomonadati</taxon>
        <taxon>Pseudomonadota</taxon>
        <taxon>Gammaproteobacteria</taxon>
        <taxon>Pseudomonadales</taxon>
        <taxon>Pseudomonadaceae</taxon>
        <taxon>Ectopseudomonas</taxon>
    </lineage>
</organism>
<keyword id="KW-0997">Cell inner membrane</keyword>
<keyword id="KW-1003">Cell membrane</keyword>
<keyword id="KW-0133">Cell shape</keyword>
<keyword id="KW-0961">Cell wall biogenesis/degradation</keyword>
<keyword id="KW-0328">Glycosyltransferase</keyword>
<keyword id="KW-0472">Membrane</keyword>
<keyword id="KW-0573">Peptidoglycan synthesis</keyword>
<keyword id="KW-0808">Transferase</keyword>
<keyword id="KW-0812">Transmembrane</keyword>
<keyword id="KW-1133">Transmembrane helix</keyword>
<gene>
    <name evidence="1" type="primary">mtgA</name>
    <name type="ordered locus">Pmen_4170</name>
</gene>
<feature type="chain" id="PRO_1000017312" description="Biosynthetic peptidoglycan transglycosylase">
    <location>
        <begin position="1"/>
        <end position="242"/>
    </location>
</feature>
<feature type="transmembrane region" description="Helical" evidence="1">
    <location>
        <begin position="12"/>
        <end position="31"/>
    </location>
</feature>
<dbReference type="EC" id="2.4.99.28" evidence="1"/>
<dbReference type="EMBL" id="CP000680">
    <property type="protein sequence ID" value="ABP86917.1"/>
    <property type="molecule type" value="Genomic_DNA"/>
</dbReference>
<dbReference type="SMR" id="A4Y001"/>
<dbReference type="STRING" id="399739.Pmen_4170"/>
<dbReference type="CAZy" id="GT51">
    <property type="family name" value="Glycosyltransferase Family 51"/>
</dbReference>
<dbReference type="KEGG" id="pmy:Pmen_4170"/>
<dbReference type="PATRIC" id="fig|399739.8.peg.4221"/>
<dbReference type="eggNOG" id="COG0744">
    <property type="taxonomic scope" value="Bacteria"/>
</dbReference>
<dbReference type="HOGENOM" id="CLU_006354_1_1_6"/>
<dbReference type="OrthoDB" id="9766909at2"/>
<dbReference type="UniPathway" id="UPA00219"/>
<dbReference type="GO" id="GO:0009274">
    <property type="term" value="C:peptidoglycan-based cell wall"/>
    <property type="evidence" value="ECO:0007669"/>
    <property type="project" value="InterPro"/>
</dbReference>
<dbReference type="GO" id="GO:0005886">
    <property type="term" value="C:plasma membrane"/>
    <property type="evidence" value="ECO:0007669"/>
    <property type="project" value="UniProtKB-SubCell"/>
</dbReference>
<dbReference type="GO" id="GO:0016763">
    <property type="term" value="F:pentosyltransferase activity"/>
    <property type="evidence" value="ECO:0007669"/>
    <property type="project" value="InterPro"/>
</dbReference>
<dbReference type="GO" id="GO:0008955">
    <property type="term" value="F:peptidoglycan glycosyltransferase activity"/>
    <property type="evidence" value="ECO:0007669"/>
    <property type="project" value="UniProtKB-UniRule"/>
</dbReference>
<dbReference type="GO" id="GO:0071555">
    <property type="term" value="P:cell wall organization"/>
    <property type="evidence" value="ECO:0007669"/>
    <property type="project" value="UniProtKB-KW"/>
</dbReference>
<dbReference type="GO" id="GO:0009252">
    <property type="term" value="P:peptidoglycan biosynthetic process"/>
    <property type="evidence" value="ECO:0007669"/>
    <property type="project" value="UniProtKB-UniRule"/>
</dbReference>
<dbReference type="GO" id="GO:0008360">
    <property type="term" value="P:regulation of cell shape"/>
    <property type="evidence" value="ECO:0007669"/>
    <property type="project" value="UniProtKB-KW"/>
</dbReference>
<dbReference type="Gene3D" id="1.10.3810.10">
    <property type="entry name" value="Biosynthetic peptidoglycan transglycosylase-like"/>
    <property type="match status" value="1"/>
</dbReference>
<dbReference type="HAMAP" id="MF_00766">
    <property type="entry name" value="PGT_MtgA"/>
    <property type="match status" value="1"/>
</dbReference>
<dbReference type="InterPro" id="IPR001264">
    <property type="entry name" value="Glyco_trans_51"/>
</dbReference>
<dbReference type="InterPro" id="IPR023346">
    <property type="entry name" value="Lysozyme-like_dom_sf"/>
</dbReference>
<dbReference type="InterPro" id="IPR036950">
    <property type="entry name" value="PBP_transglycosylase"/>
</dbReference>
<dbReference type="InterPro" id="IPR011812">
    <property type="entry name" value="Pep_trsgly"/>
</dbReference>
<dbReference type="NCBIfam" id="TIGR02070">
    <property type="entry name" value="mono_pep_trsgly"/>
    <property type="match status" value="1"/>
</dbReference>
<dbReference type="PANTHER" id="PTHR30400:SF0">
    <property type="entry name" value="BIOSYNTHETIC PEPTIDOGLYCAN TRANSGLYCOSYLASE"/>
    <property type="match status" value="1"/>
</dbReference>
<dbReference type="PANTHER" id="PTHR30400">
    <property type="entry name" value="MONOFUNCTIONAL BIOSYNTHETIC PEPTIDOGLYCAN TRANSGLYCOSYLASE"/>
    <property type="match status" value="1"/>
</dbReference>
<dbReference type="Pfam" id="PF00912">
    <property type="entry name" value="Transgly"/>
    <property type="match status" value="1"/>
</dbReference>
<dbReference type="SUPFAM" id="SSF53955">
    <property type="entry name" value="Lysozyme-like"/>
    <property type="match status" value="1"/>
</dbReference>
<comment type="function">
    <text evidence="1">Peptidoglycan polymerase that catalyzes glycan chain elongation from lipid-linked precursors.</text>
</comment>
<comment type="catalytic activity">
    <reaction evidence="1">
        <text>[GlcNAc-(1-&gt;4)-Mur2Ac(oyl-L-Ala-gamma-D-Glu-L-Lys-D-Ala-D-Ala)](n)-di-trans,octa-cis-undecaprenyl diphosphate + beta-D-GlcNAc-(1-&gt;4)-Mur2Ac(oyl-L-Ala-gamma-D-Glu-L-Lys-D-Ala-D-Ala)-di-trans,octa-cis-undecaprenyl diphosphate = [GlcNAc-(1-&gt;4)-Mur2Ac(oyl-L-Ala-gamma-D-Glu-L-Lys-D-Ala-D-Ala)](n+1)-di-trans,octa-cis-undecaprenyl diphosphate + di-trans,octa-cis-undecaprenyl diphosphate + H(+)</text>
        <dbReference type="Rhea" id="RHEA:23708"/>
        <dbReference type="Rhea" id="RHEA-COMP:9602"/>
        <dbReference type="Rhea" id="RHEA-COMP:9603"/>
        <dbReference type="ChEBI" id="CHEBI:15378"/>
        <dbReference type="ChEBI" id="CHEBI:58405"/>
        <dbReference type="ChEBI" id="CHEBI:60033"/>
        <dbReference type="ChEBI" id="CHEBI:78435"/>
        <dbReference type="EC" id="2.4.99.28"/>
    </reaction>
</comment>
<comment type="pathway">
    <text evidence="1">Cell wall biogenesis; peptidoglycan biosynthesis.</text>
</comment>
<comment type="subcellular location">
    <subcellularLocation>
        <location evidence="1">Cell inner membrane</location>
        <topology evidence="1">Single-pass membrane protein</topology>
    </subcellularLocation>
</comment>
<comment type="similarity">
    <text evidence="1">Belongs to the glycosyltransferase 51 family.</text>
</comment>
<name>MTGA_ECTM1</name>